<comment type="function">
    <text evidence="1">Plays an essential role in the initiation and regulation of chromosomal replication. ATP-DnaA binds to the origin of replication (oriC) to initiate formation of the DNA replication initiation complex once per cell cycle. Binds the DnaA box (a 9 base pair repeat at the origin) and separates the double-stranded (ds)DNA. Forms a right-handed helical filament on oriC DNA; dsDNA binds to the exterior of the filament while single-stranded (ss)DNA is stabiized in the filament's interior. The ATP-DnaA-oriC complex binds and stabilizes one strand of the AT-rich DNA unwinding element (DUE), permitting loading of DNA polymerase. After initiation quickly degrades to an ADP-DnaA complex that is not apt for DNA replication. Binds acidic phospholipids.</text>
</comment>
<comment type="subunit">
    <text evidence="1">Oligomerizes as a right-handed, spiral filament on DNA at oriC.</text>
</comment>
<comment type="subcellular location">
    <subcellularLocation>
        <location evidence="1">Cytoplasm</location>
    </subcellularLocation>
</comment>
<comment type="domain">
    <text evidence="1">Domain I is involved in oligomerization and binding regulators, domain II is flexibile and of varying length in different bacteria, domain III forms the AAA+ region, while domain IV binds dsDNA.</text>
</comment>
<comment type="similarity">
    <text evidence="1">Belongs to the DnaA family.</text>
</comment>
<proteinExistence type="inferred from homology"/>
<sequence>MNDDPNALARIWIDVVADLTSDSPGGDLPPLTRGQKAWLALVKPLTLAQGFALLSVPSPFAQEAIERDLREPILHALGRHLGEQVEGLGVRIAAPVDDEPESDPPSRDHRPEPEPLHTPRHLEPSVTSSGSFRRRRFGSGEDQPYSDTTDFEEVDDDREALASVHESWPSYFTKPPSGPAPSATGGNSLNAKYTFDTFVIGSSNRFAHAAAVAIAEAPARAYNPLFVWGASGLGKTHLLHAAGHYAQRLFPGMRVKYVSTEEFTNDFINSLRDDRKVAFKRRYRETDVLLVDDIQFIEGKEGIQEEFFHTFNTLHNANKQIVVSSDRPPKQLATLEERLRTRFEWGLITDVQPPELETRIAILSKKARMDRLEVPDDVLELIASRIERNIRELEGALIRVTAFASLNRQPLDLTLAEVVLRDLMPDSSSLEINAATIMAVTAEYFNMSIDDLCGPGKARPLASARQISMYLCRELTDLSLPKIGQTFGRDHTTVMYADKKIRKEMTERRKVYDQVQELTARIKQRSKR</sequence>
<gene>
    <name evidence="1" type="primary">dnaA</name>
    <name type="ordered locus">RHA1_ro03666</name>
</gene>
<organism>
    <name type="scientific">Rhodococcus jostii (strain RHA1)</name>
    <dbReference type="NCBI Taxonomy" id="101510"/>
    <lineage>
        <taxon>Bacteria</taxon>
        <taxon>Bacillati</taxon>
        <taxon>Actinomycetota</taxon>
        <taxon>Actinomycetes</taxon>
        <taxon>Mycobacteriales</taxon>
        <taxon>Nocardiaceae</taxon>
        <taxon>Rhodococcus</taxon>
    </lineage>
</organism>
<dbReference type="EMBL" id="CP000431">
    <property type="protein sequence ID" value="ABG95469.1"/>
    <property type="molecule type" value="Genomic_DNA"/>
</dbReference>
<dbReference type="RefSeq" id="WP_011596259.1">
    <property type="nucleotide sequence ID" value="NC_008268.1"/>
</dbReference>
<dbReference type="SMR" id="Q0SAG7"/>
<dbReference type="KEGG" id="rha:RHA1_ro03666"/>
<dbReference type="PATRIC" id="fig|101510.16.peg.3692"/>
<dbReference type="eggNOG" id="COG0593">
    <property type="taxonomic scope" value="Bacteria"/>
</dbReference>
<dbReference type="HOGENOM" id="CLU_026910_2_0_11"/>
<dbReference type="OrthoDB" id="9807019at2"/>
<dbReference type="Proteomes" id="UP000008710">
    <property type="component" value="Chromosome"/>
</dbReference>
<dbReference type="GO" id="GO:0005737">
    <property type="term" value="C:cytoplasm"/>
    <property type="evidence" value="ECO:0007669"/>
    <property type="project" value="UniProtKB-SubCell"/>
</dbReference>
<dbReference type="GO" id="GO:0005886">
    <property type="term" value="C:plasma membrane"/>
    <property type="evidence" value="ECO:0007669"/>
    <property type="project" value="TreeGrafter"/>
</dbReference>
<dbReference type="GO" id="GO:0005524">
    <property type="term" value="F:ATP binding"/>
    <property type="evidence" value="ECO:0007669"/>
    <property type="project" value="UniProtKB-UniRule"/>
</dbReference>
<dbReference type="GO" id="GO:0016887">
    <property type="term" value="F:ATP hydrolysis activity"/>
    <property type="evidence" value="ECO:0007669"/>
    <property type="project" value="InterPro"/>
</dbReference>
<dbReference type="GO" id="GO:0003688">
    <property type="term" value="F:DNA replication origin binding"/>
    <property type="evidence" value="ECO:0007669"/>
    <property type="project" value="UniProtKB-UniRule"/>
</dbReference>
<dbReference type="GO" id="GO:0008289">
    <property type="term" value="F:lipid binding"/>
    <property type="evidence" value="ECO:0007669"/>
    <property type="project" value="UniProtKB-KW"/>
</dbReference>
<dbReference type="GO" id="GO:0006270">
    <property type="term" value="P:DNA replication initiation"/>
    <property type="evidence" value="ECO:0007669"/>
    <property type="project" value="UniProtKB-UniRule"/>
</dbReference>
<dbReference type="GO" id="GO:0006275">
    <property type="term" value="P:regulation of DNA replication"/>
    <property type="evidence" value="ECO:0007669"/>
    <property type="project" value="UniProtKB-UniRule"/>
</dbReference>
<dbReference type="CDD" id="cd00009">
    <property type="entry name" value="AAA"/>
    <property type="match status" value="1"/>
</dbReference>
<dbReference type="CDD" id="cd06571">
    <property type="entry name" value="Bac_DnaA_C"/>
    <property type="match status" value="1"/>
</dbReference>
<dbReference type="FunFam" id="1.10.1750.10:FF:000002">
    <property type="entry name" value="Chromosomal replication initiator protein DnaA"/>
    <property type="match status" value="1"/>
</dbReference>
<dbReference type="FunFam" id="1.10.8.60:FF:000003">
    <property type="entry name" value="Chromosomal replication initiator protein DnaA"/>
    <property type="match status" value="1"/>
</dbReference>
<dbReference type="FunFam" id="3.40.50.300:FF:000150">
    <property type="entry name" value="Chromosomal replication initiator protein DnaA"/>
    <property type="match status" value="1"/>
</dbReference>
<dbReference type="Gene3D" id="1.10.1750.10">
    <property type="match status" value="1"/>
</dbReference>
<dbReference type="Gene3D" id="1.10.8.60">
    <property type="match status" value="1"/>
</dbReference>
<dbReference type="Gene3D" id="3.40.50.300">
    <property type="entry name" value="P-loop containing nucleotide triphosphate hydrolases"/>
    <property type="match status" value="1"/>
</dbReference>
<dbReference type="HAMAP" id="MF_00377">
    <property type="entry name" value="DnaA_bact"/>
    <property type="match status" value="1"/>
</dbReference>
<dbReference type="InterPro" id="IPR003593">
    <property type="entry name" value="AAA+_ATPase"/>
</dbReference>
<dbReference type="InterPro" id="IPR001957">
    <property type="entry name" value="Chromosome_initiator_DnaA"/>
</dbReference>
<dbReference type="InterPro" id="IPR020591">
    <property type="entry name" value="Chromosome_initiator_DnaA-like"/>
</dbReference>
<dbReference type="InterPro" id="IPR018312">
    <property type="entry name" value="Chromosome_initiator_DnaA_CS"/>
</dbReference>
<dbReference type="InterPro" id="IPR013159">
    <property type="entry name" value="DnaA_C"/>
</dbReference>
<dbReference type="InterPro" id="IPR013317">
    <property type="entry name" value="DnaA_dom"/>
</dbReference>
<dbReference type="InterPro" id="IPR027417">
    <property type="entry name" value="P-loop_NTPase"/>
</dbReference>
<dbReference type="InterPro" id="IPR010921">
    <property type="entry name" value="Trp_repressor/repl_initiator"/>
</dbReference>
<dbReference type="NCBIfam" id="TIGR00362">
    <property type="entry name" value="DnaA"/>
    <property type="match status" value="1"/>
</dbReference>
<dbReference type="NCBIfam" id="NF010686">
    <property type="entry name" value="PRK14086.1"/>
    <property type="match status" value="1"/>
</dbReference>
<dbReference type="PANTHER" id="PTHR30050">
    <property type="entry name" value="CHROMOSOMAL REPLICATION INITIATOR PROTEIN DNAA"/>
    <property type="match status" value="1"/>
</dbReference>
<dbReference type="PANTHER" id="PTHR30050:SF2">
    <property type="entry name" value="CHROMOSOMAL REPLICATION INITIATOR PROTEIN DNAA"/>
    <property type="match status" value="1"/>
</dbReference>
<dbReference type="Pfam" id="PF00308">
    <property type="entry name" value="Bac_DnaA"/>
    <property type="match status" value="1"/>
</dbReference>
<dbReference type="Pfam" id="PF08299">
    <property type="entry name" value="Bac_DnaA_C"/>
    <property type="match status" value="1"/>
</dbReference>
<dbReference type="PRINTS" id="PR00051">
    <property type="entry name" value="DNAA"/>
</dbReference>
<dbReference type="SMART" id="SM00382">
    <property type="entry name" value="AAA"/>
    <property type="match status" value="1"/>
</dbReference>
<dbReference type="SMART" id="SM00760">
    <property type="entry name" value="Bac_DnaA_C"/>
    <property type="match status" value="1"/>
</dbReference>
<dbReference type="SUPFAM" id="SSF52540">
    <property type="entry name" value="P-loop containing nucleoside triphosphate hydrolases"/>
    <property type="match status" value="1"/>
</dbReference>
<dbReference type="SUPFAM" id="SSF48295">
    <property type="entry name" value="TrpR-like"/>
    <property type="match status" value="1"/>
</dbReference>
<dbReference type="PROSITE" id="PS01008">
    <property type="entry name" value="DNAA"/>
    <property type="match status" value="1"/>
</dbReference>
<name>DNAA_RHOJR</name>
<keyword id="KW-0067">ATP-binding</keyword>
<keyword id="KW-0963">Cytoplasm</keyword>
<keyword id="KW-0235">DNA replication</keyword>
<keyword id="KW-0238">DNA-binding</keyword>
<keyword id="KW-0446">Lipid-binding</keyword>
<keyword id="KW-0547">Nucleotide-binding</keyword>
<feature type="chain" id="PRO_1000048708" description="Chromosomal replication initiator protein DnaA">
    <location>
        <begin position="1"/>
        <end position="528"/>
    </location>
</feature>
<feature type="region of interest" description="Domain I, interacts with DnaA modulators" evidence="1">
    <location>
        <begin position="1"/>
        <end position="104"/>
    </location>
</feature>
<feature type="region of interest" description="Disordered" evidence="2">
    <location>
        <begin position="95"/>
        <end position="158"/>
    </location>
</feature>
<feature type="region of interest" description="Domain II" evidence="1">
    <location>
        <begin position="105"/>
        <end position="187"/>
    </location>
</feature>
<feature type="region of interest" description="Domain III, AAA+ region" evidence="1">
    <location>
        <begin position="188"/>
        <end position="404"/>
    </location>
</feature>
<feature type="region of interest" description="Domain IV, binds dsDNA" evidence="1">
    <location>
        <begin position="405"/>
        <end position="528"/>
    </location>
</feature>
<feature type="compositionally biased region" description="Basic and acidic residues" evidence="2">
    <location>
        <begin position="104"/>
        <end position="123"/>
    </location>
</feature>
<feature type="compositionally biased region" description="Acidic residues" evidence="2">
    <location>
        <begin position="149"/>
        <end position="158"/>
    </location>
</feature>
<feature type="binding site" evidence="1">
    <location>
        <position position="232"/>
    </location>
    <ligand>
        <name>ATP</name>
        <dbReference type="ChEBI" id="CHEBI:30616"/>
    </ligand>
</feature>
<feature type="binding site" evidence="1">
    <location>
        <position position="234"/>
    </location>
    <ligand>
        <name>ATP</name>
        <dbReference type="ChEBI" id="CHEBI:30616"/>
    </ligand>
</feature>
<feature type="binding site" evidence="1">
    <location>
        <position position="235"/>
    </location>
    <ligand>
        <name>ATP</name>
        <dbReference type="ChEBI" id="CHEBI:30616"/>
    </ligand>
</feature>
<feature type="binding site" evidence="1">
    <location>
        <position position="236"/>
    </location>
    <ligand>
        <name>ATP</name>
        <dbReference type="ChEBI" id="CHEBI:30616"/>
    </ligand>
</feature>
<accession>Q0SAG7</accession>
<evidence type="ECO:0000255" key="1">
    <source>
        <dbReference type="HAMAP-Rule" id="MF_00377"/>
    </source>
</evidence>
<evidence type="ECO:0000256" key="2">
    <source>
        <dbReference type="SAM" id="MobiDB-lite"/>
    </source>
</evidence>
<protein>
    <recommendedName>
        <fullName evidence="1">Chromosomal replication initiator protein DnaA</fullName>
    </recommendedName>
</protein>
<reference key="1">
    <citation type="journal article" date="2006" name="Proc. Natl. Acad. Sci. U.S.A.">
        <title>The complete genome of Rhodococcus sp. RHA1 provides insights into a catabolic powerhouse.</title>
        <authorList>
            <person name="McLeod M.P."/>
            <person name="Warren R.L."/>
            <person name="Hsiao W.W.L."/>
            <person name="Araki N."/>
            <person name="Myhre M."/>
            <person name="Fernandes C."/>
            <person name="Miyazawa D."/>
            <person name="Wong W."/>
            <person name="Lillquist A.L."/>
            <person name="Wang D."/>
            <person name="Dosanjh M."/>
            <person name="Hara H."/>
            <person name="Petrescu A."/>
            <person name="Morin R.D."/>
            <person name="Yang G."/>
            <person name="Stott J.M."/>
            <person name="Schein J.E."/>
            <person name="Shin H."/>
            <person name="Smailus D."/>
            <person name="Siddiqui A.S."/>
            <person name="Marra M.A."/>
            <person name="Jones S.J.M."/>
            <person name="Holt R."/>
            <person name="Brinkman F.S.L."/>
            <person name="Miyauchi K."/>
            <person name="Fukuda M."/>
            <person name="Davies J.E."/>
            <person name="Mohn W.W."/>
            <person name="Eltis L.D."/>
        </authorList>
    </citation>
    <scope>NUCLEOTIDE SEQUENCE [LARGE SCALE GENOMIC DNA]</scope>
    <source>
        <strain>RHA1</strain>
    </source>
</reference>